<proteinExistence type="evidence at protein level"/>
<reference key="1">
    <citation type="journal article" date="2000" name="Biochem. Biophys. Res. Commun.">
        <title>Enzymatic properties, tissue-specific expression, and lysosomal location of two highly homologous rat SULT1C2 sulfotransferases.</title>
        <authorList>
            <person name="Xiangrong L."/>
            <person name="Joehnk C."/>
            <person name="Hartmann D."/>
            <person name="Schestag F."/>
            <person name="Kroemer W."/>
            <person name="Gieselmann V."/>
        </authorList>
    </citation>
    <scope>NUCLEOTIDE SEQUENCE [MRNA]</scope>
    <scope>SUBCELLULAR LOCATION</scope>
    <scope>TISSUE SPECIFICITY</scope>
    <scope>CATALYTIC ACTIVITY</scope>
    <scope>FUNCTION</scope>
    <source>
        <tissue>Kidney</tissue>
    </source>
</reference>
<reference key="2">
    <citation type="journal article" date="2004" name="Nature">
        <title>Genome sequence of the Brown Norway rat yields insights into mammalian evolution.</title>
        <authorList>
            <person name="Gibbs R.A."/>
            <person name="Weinstock G.M."/>
            <person name="Metzker M.L."/>
            <person name="Muzny D.M."/>
            <person name="Sodergren E.J."/>
            <person name="Scherer S."/>
            <person name="Scott G."/>
            <person name="Steffen D."/>
            <person name="Worley K.C."/>
            <person name="Burch P.E."/>
            <person name="Okwuonu G."/>
            <person name="Hines S."/>
            <person name="Lewis L."/>
            <person name="Deramo C."/>
            <person name="Delgado O."/>
            <person name="Dugan-Rocha S."/>
            <person name="Miner G."/>
            <person name="Morgan M."/>
            <person name="Hawes A."/>
            <person name="Gill R."/>
            <person name="Holt R.A."/>
            <person name="Adams M.D."/>
            <person name="Amanatides P.G."/>
            <person name="Baden-Tillson H."/>
            <person name="Barnstead M."/>
            <person name="Chin S."/>
            <person name="Evans C.A."/>
            <person name="Ferriera S."/>
            <person name="Fosler C."/>
            <person name="Glodek A."/>
            <person name="Gu Z."/>
            <person name="Jennings D."/>
            <person name="Kraft C.L."/>
            <person name="Nguyen T."/>
            <person name="Pfannkoch C.M."/>
            <person name="Sitter C."/>
            <person name="Sutton G.G."/>
            <person name="Venter J.C."/>
            <person name="Woodage T."/>
            <person name="Smith D."/>
            <person name="Lee H.-M."/>
            <person name="Gustafson E."/>
            <person name="Cahill P."/>
            <person name="Kana A."/>
            <person name="Doucette-Stamm L."/>
            <person name="Weinstock K."/>
            <person name="Fechtel K."/>
            <person name="Weiss R.B."/>
            <person name="Dunn D.M."/>
            <person name="Green E.D."/>
            <person name="Blakesley R.W."/>
            <person name="Bouffard G.G."/>
            <person name="De Jong P.J."/>
            <person name="Osoegawa K."/>
            <person name="Zhu B."/>
            <person name="Marra M."/>
            <person name="Schein J."/>
            <person name="Bosdet I."/>
            <person name="Fjell C."/>
            <person name="Jones S."/>
            <person name="Krzywinski M."/>
            <person name="Mathewson C."/>
            <person name="Siddiqui A."/>
            <person name="Wye N."/>
            <person name="McPherson J."/>
            <person name="Zhao S."/>
            <person name="Fraser C.M."/>
            <person name="Shetty J."/>
            <person name="Shatsman S."/>
            <person name="Geer K."/>
            <person name="Chen Y."/>
            <person name="Abramzon S."/>
            <person name="Nierman W.C."/>
            <person name="Havlak P.H."/>
            <person name="Chen R."/>
            <person name="Durbin K.J."/>
            <person name="Egan A."/>
            <person name="Ren Y."/>
            <person name="Song X.-Z."/>
            <person name="Li B."/>
            <person name="Liu Y."/>
            <person name="Qin X."/>
            <person name="Cawley S."/>
            <person name="Cooney A.J."/>
            <person name="D'Souza L.M."/>
            <person name="Martin K."/>
            <person name="Wu J.Q."/>
            <person name="Gonzalez-Garay M.L."/>
            <person name="Jackson A.R."/>
            <person name="Kalafus K.J."/>
            <person name="McLeod M.P."/>
            <person name="Milosavljevic A."/>
            <person name="Virk D."/>
            <person name="Volkov A."/>
            <person name="Wheeler D.A."/>
            <person name="Zhang Z."/>
            <person name="Bailey J.A."/>
            <person name="Eichler E.E."/>
            <person name="Tuzun E."/>
            <person name="Birney E."/>
            <person name="Mongin E."/>
            <person name="Ureta-Vidal A."/>
            <person name="Woodwark C."/>
            <person name="Zdobnov E."/>
            <person name="Bork P."/>
            <person name="Suyama M."/>
            <person name="Torrents D."/>
            <person name="Alexandersson M."/>
            <person name="Trask B.J."/>
            <person name="Young J.M."/>
            <person name="Huang H."/>
            <person name="Wang H."/>
            <person name="Xing H."/>
            <person name="Daniels S."/>
            <person name="Gietzen D."/>
            <person name="Schmidt J."/>
            <person name="Stevens K."/>
            <person name="Vitt U."/>
            <person name="Wingrove J."/>
            <person name="Camara F."/>
            <person name="Mar Alba M."/>
            <person name="Abril J.F."/>
            <person name="Guigo R."/>
            <person name="Smit A."/>
            <person name="Dubchak I."/>
            <person name="Rubin E.M."/>
            <person name="Couronne O."/>
            <person name="Poliakov A."/>
            <person name="Huebner N."/>
            <person name="Ganten D."/>
            <person name="Goesele C."/>
            <person name="Hummel O."/>
            <person name="Kreitler T."/>
            <person name="Lee Y.-A."/>
            <person name="Monti J."/>
            <person name="Schulz H."/>
            <person name="Zimdahl H."/>
            <person name="Himmelbauer H."/>
            <person name="Lehrach H."/>
            <person name="Jacob H.J."/>
            <person name="Bromberg S."/>
            <person name="Gullings-Handley J."/>
            <person name="Jensen-Seaman M.I."/>
            <person name="Kwitek A.E."/>
            <person name="Lazar J."/>
            <person name="Pasko D."/>
            <person name="Tonellato P.J."/>
            <person name="Twigger S."/>
            <person name="Ponting C.P."/>
            <person name="Duarte J.M."/>
            <person name="Rice S."/>
            <person name="Goodstadt L."/>
            <person name="Beatson S.A."/>
            <person name="Emes R.D."/>
            <person name="Winter E.E."/>
            <person name="Webber C."/>
            <person name="Brandt P."/>
            <person name="Nyakatura G."/>
            <person name="Adetobi M."/>
            <person name="Chiaromonte F."/>
            <person name="Elnitski L."/>
            <person name="Eswara P."/>
            <person name="Hardison R.C."/>
            <person name="Hou M."/>
            <person name="Kolbe D."/>
            <person name="Makova K."/>
            <person name="Miller W."/>
            <person name="Nekrutenko A."/>
            <person name="Riemer C."/>
            <person name="Schwartz S."/>
            <person name="Taylor J."/>
            <person name="Yang S."/>
            <person name="Zhang Y."/>
            <person name="Lindpaintner K."/>
            <person name="Andrews T.D."/>
            <person name="Caccamo M."/>
            <person name="Clamp M."/>
            <person name="Clarke L."/>
            <person name="Curwen V."/>
            <person name="Durbin R.M."/>
            <person name="Eyras E."/>
            <person name="Searle S.M."/>
            <person name="Cooper G.M."/>
            <person name="Batzoglou S."/>
            <person name="Brudno M."/>
            <person name="Sidow A."/>
            <person name="Stone E.A."/>
            <person name="Payseur B.A."/>
            <person name="Bourque G."/>
            <person name="Lopez-Otin C."/>
            <person name="Puente X.S."/>
            <person name="Chakrabarti K."/>
            <person name="Chatterji S."/>
            <person name="Dewey C."/>
            <person name="Pachter L."/>
            <person name="Bray N."/>
            <person name="Yap V.B."/>
            <person name="Caspi A."/>
            <person name="Tesler G."/>
            <person name="Pevzner P.A."/>
            <person name="Haussler D."/>
            <person name="Roskin K.M."/>
            <person name="Baertsch R."/>
            <person name="Clawson H."/>
            <person name="Furey T.S."/>
            <person name="Hinrichs A.S."/>
            <person name="Karolchik D."/>
            <person name="Kent W.J."/>
            <person name="Rosenbloom K.R."/>
            <person name="Trumbower H."/>
            <person name="Weirauch M."/>
            <person name="Cooper D.N."/>
            <person name="Stenson P.D."/>
            <person name="Ma B."/>
            <person name="Brent M."/>
            <person name="Arumugam M."/>
            <person name="Shteynberg D."/>
            <person name="Copley R.R."/>
            <person name="Taylor M.S."/>
            <person name="Riethman H."/>
            <person name="Mudunuri U."/>
            <person name="Peterson J."/>
            <person name="Guyer M."/>
            <person name="Felsenfeld A."/>
            <person name="Old S."/>
            <person name="Mockrin S."/>
            <person name="Collins F.S."/>
        </authorList>
    </citation>
    <scope>NUCLEOTIDE SEQUENCE [LARGE SCALE GENOMIC DNA]</scope>
    <source>
        <strain>Brown Norway</strain>
    </source>
</reference>
<reference key="3">
    <citation type="journal article" date="2004" name="Genome Res.">
        <title>The status, quality, and expansion of the NIH full-length cDNA project: the Mammalian Gene Collection (MGC).</title>
        <authorList>
            <consortium name="The MGC Project Team"/>
        </authorList>
    </citation>
    <scope>NUCLEOTIDE SEQUENCE [LARGE SCALE MRNA]</scope>
    <source>
        <tissue>Kidney</tissue>
    </source>
</reference>
<reference key="4">
    <citation type="journal article" date="2002" name="Kidney Int.">
        <title>Decreased sulfotransferase SULT1C2 gene expression in DPT-induced polycystic kidney.</title>
        <authorList>
            <person name="Sugimura K."/>
            <person name="Tanaka T."/>
            <person name="Tanaka Y."/>
            <person name="Takano H."/>
            <person name="Kanagawa K."/>
            <person name="Sakamoto N."/>
            <person name="Ikemoto S."/>
            <person name="Kawashima H."/>
            <person name="Nakatani T."/>
        </authorList>
    </citation>
    <scope>INDUCTION</scope>
</reference>
<reference key="5">
    <citation type="journal article" date="2024" name="Biochemistry">
        <title>Sulfotransferase 1C2 Increases Mitochondrial Respiration by Converting Mitochondrial Membrane Cholesterol to Cholesterol Sulfate.</title>
        <authorList>
            <person name="Kolb A.J."/>
            <person name="Corridon P."/>
            <person name="Ullah M."/>
            <person name="Pfaffenberger Z.J."/>
            <person name="Xu W.M."/>
            <person name="Winfree S."/>
            <person name="Sandoval R.H."/>
            <person name="Hato T."/>
            <person name="Witzmann F.A."/>
            <person name="Mohallem R."/>
            <person name="Franco J."/>
            <person name="Aryal U.K."/>
            <person name="Atkinson S.J."/>
            <person name="Basile D.P."/>
            <person name="Bacallao R.L."/>
        </authorList>
    </citation>
    <scope>FUNCTION</scope>
    <scope>CATALYTIC ACTIVITY</scope>
    <scope>SUBCELLULAR LOCATION</scope>
</reference>
<sequence>MALAPELSRQTKLKEVAGIPLQAPTVDNWSQIQTFKAKPDDLLICTYPKSGTTWIQEIVDMIEQNGDVEKCQRTIIQHRHPFIEWARPPQPSGVDKANAMPAPRILRTHLPTQLLPPSFWTNNCKFLYVARNAKDCMVSYYHFYRMSQVLPDPGTWNEYFETFINGKVSWGSWFDHVKGWWEIRDRYQILFLFYEDMKRDPKREIQKVMQFMGKNLDEEVVDKIVLETSFEKMKENPMTNRSTVPKSVLDQSISPFMRKGTVGDWKNHFTVAQNDRFDEIYKQKMGGTSLNFCMEL</sequence>
<gene>
    <name type="primary">Sult1c2</name>
    <name type="synonym">Sultk1</name>
</gene>
<organism>
    <name type="scientific">Rattus norvegicus</name>
    <name type="common">Rat</name>
    <dbReference type="NCBI Taxonomy" id="10116"/>
    <lineage>
        <taxon>Eukaryota</taxon>
        <taxon>Metazoa</taxon>
        <taxon>Chordata</taxon>
        <taxon>Craniata</taxon>
        <taxon>Vertebrata</taxon>
        <taxon>Euteleostomi</taxon>
        <taxon>Mammalia</taxon>
        <taxon>Eutheria</taxon>
        <taxon>Euarchontoglires</taxon>
        <taxon>Glires</taxon>
        <taxon>Rodentia</taxon>
        <taxon>Myomorpha</taxon>
        <taxon>Muroidea</taxon>
        <taxon>Muridae</taxon>
        <taxon>Murinae</taxon>
        <taxon>Rattus</taxon>
    </lineage>
</organism>
<dbReference type="EC" id="2.8.2.1" evidence="5"/>
<dbReference type="EMBL" id="AJ238391">
    <property type="protein sequence ID" value="CAB41460.1"/>
    <property type="molecule type" value="mRNA"/>
</dbReference>
<dbReference type="EMBL" id="AABR07066190">
    <property type="status" value="NOT_ANNOTATED_CDS"/>
    <property type="molecule type" value="Genomic_DNA"/>
</dbReference>
<dbReference type="EMBL" id="AABR07066204">
    <property type="status" value="NOT_ANNOTATED_CDS"/>
    <property type="molecule type" value="Genomic_DNA"/>
</dbReference>
<dbReference type="EMBL" id="AABR07066203">
    <property type="status" value="NOT_ANNOTATED_CDS"/>
    <property type="molecule type" value="Genomic_DNA"/>
</dbReference>
<dbReference type="EMBL" id="AABR07066194">
    <property type="status" value="NOT_ANNOTATED_CDS"/>
    <property type="molecule type" value="Genomic_DNA"/>
</dbReference>
<dbReference type="EMBL" id="AABR07066193">
    <property type="status" value="NOT_ANNOTATED_CDS"/>
    <property type="molecule type" value="Genomic_DNA"/>
</dbReference>
<dbReference type="EMBL" id="AABR07066192">
    <property type="status" value="NOT_ANNOTATED_CDS"/>
    <property type="molecule type" value="Genomic_DNA"/>
</dbReference>
<dbReference type="EMBL" id="AABR07066191">
    <property type="status" value="NOT_ANNOTATED_CDS"/>
    <property type="molecule type" value="Genomic_DNA"/>
</dbReference>
<dbReference type="EMBL" id="BC103636">
    <property type="protein sequence ID" value="AAI03637.1"/>
    <property type="molecule type" value="mRNA"/>
</dbReference>
<dbReference type="PIR" id="JC7282">
    <property type="entry name" value="JC7282"/>
</dbReference>
<dbReference type="RefSeq" id="NP_598231.3">
    <property type="nucleotide sequence ID" value="NM_133547.4"/>
</dbReference>
<dbReference type="RefSeq" id="XP_006244304.1">
    <property type="nucleotide sequence ID" value="XM_006244242.3"/>
</dbReference>
<dbReference type="RefSeq" id="XP_006244305.1">
    <property type="nucleotide sequence ID" value="XM_006244243.3"/>
</dbReference>
<dbReference type="RefSeq" id="XP_006244307.1">
    <property type="nucleotide sequence ID" value="XM_006244245.3"/>
</dbReference>
<dbReference type="RefSeq" id="XP_006244308.1">
    <property type="nucleotide sequence ID" value="XM_006244246.3"/>
</dbReference>
<dbReference type="RefSeq" id="XP_006244311.1">
    <property type="nucleotide sequence ID" value="XM_006244249.3"/>
</dbReference>
<dbReference type="RefSeq" id="XP_006244312.1">
    <property type="nucleotide sequence ID" value="XM_006244250.3"/>
</dbReference>
<dbReference type="RefSeq" id="XP_006244316.1">
    <property type="nucleotide sequence ID" value="XM_006244254.3"/>
</dbReference>
<dbReference type="RefSeq" id="XP_008764960.1">
    <property type="nucleotide sequence ID" value="XM_008766738.2"/>
</dbReference>
<dbReference type="RefSeq" id="XP_008764961.1">
    <property type="nucleotide sequence ID" value="XM_008766739.1"/>
</dbReference>
<dbReference type="RefSeq" id="XP_008764962.1">
    <property type="nucleotide sequence ID" value="XM_008766740.1"/>
</dbReference>
<dbReference type="RefSeq" id="XP_008764963.1">
    <property type="nucleotide sequence ID" value="XM_008766741.1"/>
</dbReference>
<dbReference type="RefSeq" id="XP_008764964.1">
    <property type="nucleotide sequence ID" value="XM_008766742.2"/>
</dbReference>
<dbReference type="RefSeq" id="XP_008764966.1">
    <property type="nucleotide sequence ID" value="XM_008766744.2"/>
</dbReference>
<dbReference type="RefSeq" id="XP_008764967.1">
    <property type="nucleotide sequence ID" value="XM_008766745.2"/>
</dbReference>
<dbReference type="RefSeq" id="XP_017451744.1">
    <property type="nucleotide sequence ID" value="XM_017596255.1"/>
</dbReference>
<dbReference type="SMR" id="Q9WUW8"/>
<dbReference type="FunCoup" id="Q9WUW8">
    <property type="interactions" value="35"/>
</dbReference>
<dbReference type="STRING" id="10116.ENSRNOP00000058611"/>
<dbReference type="iPTMnet" id="Q9WUW8"/>
<dbReference type="PhosphoSitePlus" id="Q9WUW8"/>
<dbReference type="PaxDb" id="10116-ENSRNOP00000046569"/>
<dbReference type="GeneID" id="171072"/>
<dbReference type="KEGG" id="rno:171072"/>
<dbReference type="UCSC" id="RGD:621064">
    <property type="organism name" value="rat"/>
</dbReference>
<dbReference type="AGR" id="RGD:41320429"/>
<dbReference type="AGR" id="RGD:621064"/>
<dbReference type="CTD" id="6819"/>
<dbReference type="RGD" id="621064">
    <property type="gene designation" value="Sult1c2"/>
</dbReference>
<dbReference type="eggNOG" id="KOG1584">
    <property type="taxonomic scope" value="Eukaryota"/>
</dbReference>
<dbReference type="InParanoid" id="Q9WUW8"/>
<dbReference type="OrthoDB" id="205623at2759"/>
<dbReference type="PhylomeDB" id="Q9WUW8"/>
<dbReference type="BRENDA" id="2.8.2.1">
    <property type="organism ID" value="5301"/>
</dbReference>
<dbReference type="Reactome" id="R-RNO-156584">
    <property type="pathway name" value="Cytosolic sulfonation of small molecules"/>
</dbReference>
<dbReference type="PRO" id="PR:Q9WUW8"/>
<dbReference type="Proteomes" id="UP000002494">
    <property type="component" value="Chromosome 9"/>
</dbReference>
<dbReference type="Bgee" id="ENSRNOG00000040215">
    <property type="expression patterns" value="Expressed in kidney and 10 other cell types or tissues"/>
</dbReference>
<dbReference type="GO" id="GO:0005737">
    <property type="term" value="C:cytoplasm"/>
    <property type="evidence" value="ECO:0000318"/>
    <property type="project" value="GO_Central"/>
</dbReference>
<dbReference type="GO" id="GO:0005764">
    <property type="term" value="C:lysosome"/>
    <property type="evidence" value="ECO:0000314"/>
    <property type="project" value="UniProtKB"/>
</dbReference>
<dbReference type="GO" id="GO:0005739">
    <property type="term" value="C:mitochondrion"/>
    <property type="evidence" value="ECO:0007669"/>
    <property type="project" value="UniProtKB-SubCell"/>
</dbReference>
<dbReference type="GO" id="GO:0004062">
    <property type="term" value="F:aryl sulfotransferase activity"/>
    <property type="evidence" value="ECO:0000314"/>
    <property type="project" value="UniProtKB"/>
</dbReference>
<dbReference type="GO" id="GO:0051922">
    <property type="term" value="F:cholesterol sulfotransferase activity"/>
    <property type="evidence" value="ECO:0007669"/>
    <property type="project" value="RHEA"/>
</dbReference>
<dbReference type="GO" id="GO:0051923">
    <property type="term" value="P:sulfation"/>
    <property type="evidence" value="ECO:0000314"/>
    <property type="project" value="UniProtKB"/>
</dbReference>
<dbReference type="FunFam" id="3.40.50.300:FF:000433">
    <property type="entry name" value="Estrogen sulfotransferase"/>
    <property type="match status" value="1"/>
</dbReference>
<dbReference type="Gene3D" id="3.40.50.300">
    <property type="entry name" value="P-loop containing nucleotide triphosphate hydrolases"/>
    <property type="match status" value="1"/>
</dbReference>
<dbReference type="InterPro" id="IPR027417">
    <property type="entry name" value="P-loop_NTPase"/>
</dbReference>
<dbReference type="InterPro" id="IPR000863">
    <property type="entry name" value="Sulfotransferase_dom"/>
</dbReference>
<dbReference type="PANTHER" id="PTHR11783">
    <property type="entry name" value="SULFOTRANSFERASE SULT"/>
    <property type="match status" value="1"/>
</dbReference>
<dbReference type="Pfam" id="PF00685">
    <property type="entry name" value="Sulfotransfer_1"/>
    <property type="match status" value="1"/>
</dbReference>
<dbReference type="SUPFAM" id="SSF52540">
    <property type="entry name" value="P-loop containing nucleoside triphosphate hydrolases"/>
    <property type="match status" value="1"/>
</dbReference>
<evidence type="ECO:0000250" key="1"/>
<evidence type="ECO:0000250" key="2">
    <source>
        <dbReference type="UniProtKB" id="O00338"/>
    </source>
</evidence>
<evidence type="ECO:0000250" key="3">
    <source>
        <dbReference type="UniProtKB" id="O46503"/>
    </source>
</evidence>
<evidence type="ECO:0000250" key="4">
    <source>
        <dbReference type="UniProtKB" id="Q9D939"/>
    </source>
</evidence>
<evidence type="ECO:0000269" key="5">
    <source>
    </source>
</evidence>
<evidence type="ECO:0000269" key="6">
    <source>
    </source>
</evidence>
<evidence type="ECO:0000269" key="7">
    <source>
    </source>
</evidence>
<evidence type="ECO:0000305" key="8"/>
<evidence type="ECO:0000305" key="9">
    <source>
    </source>
</evidence>
<evidence type="ECO:0000305" key="10">
    <source>
    </source>
</evidence>
<protein>
    <recommendedName>
        <fullName>Sulfotransferase 1C2</fullName>
        <shortName>ST1C2</shortName>
        <shortName>rSULT1C2</shortName>
        <ecNumber evidence="5">2.8.2.1</ecNumber>
    </recommendedName>
    <alternativeName>
        <fullName>Sulfotransferase K1</fullName>
    </alternativeName>
</protein>
<feature type="chain" id="PRO_0000085135" description="Sulfotransferase 1C2">
    <location>
        <begin position="1"/>
        <end position="296"/>
    </location>
</feature>
<feature type="active site" description="Proton acceptor" evidence="1">
    <location>
        <position position="109"/>
    </location>
</feature>
<feature type="binding site" evidence="2">
    <location>
        <begin position="49"/>
        <end position="54"/>
    </location>
    <ligand>
        <name>3'-phosphoadenylyl sulfate</name>
        <dbReference type="ChEBI" id="CHEBI:58339"/>
    </ligand>
</feature>
<feature type="binding site" evidence="1">
    <location>
        <begin position="107"/>
        <end position="109"/>
    </location>
    <ligand>
        <name>substrate</name>
    </ligand>
</feature>
<feature type="binding site" evidence="2">
    <location>
        <position position="131"/>
    </location>
    <ligand>
        <name>3'-phosphoadenylyl sulfate</name>
        <dbReference type="ChEBI" id="CHEBI:58339"/>
    </ligand>
</feature>
<feature type="binding site" evidence="2">
    <location>
        <position position="139"/>
    </location>
    <ligand>
        <name>3'-phosphoadenylyl sulfate</name>
        <dbReference type="ChEBI" id="CHEBI:58339"/>
    </ligand>
</feature>
<feature type="binding site" evidence="2">
    <location>
        <position position="194"/>
    </location>
    <ligand>
        <name>3'-phosphoadenylyl sulfate</name>
        <dbReference type="ChEBI" id="CHEBI:58339"/>
    </ligand>
</feature>
<feature type="binding site" evidence="2">
    <location>
        <begin position="228"/>
        <end position="233"/>
    </location>
    <ligand>
        <name>3'-phosphoadenylyl sulfate</name>
        <dbReference type="ChEBI" id="CHEBI:58339"/>
    </ligand>
</feature>
<feature type="binding site" evidence="2">
    <location>
        <begin position="256"/>
        <end position="260"/>
    </location>
    <ligand>
        <name>3'-phosphoadenylyl sulfate</name>
        <dbReference type="ChEBI" id="CHEBI:58339"/>
    </ligand>
</feature>
<feature type="modified residue" description="Phosphoserine" evidence="4">
    <location>
        <position position="139"/>
    </location>
</feature>
<feature type="modified residue" description="Phosphoserine" evidence="4">
    <location>
        <position position="254"/>
    </location>
</feature>
<feature type="sequence conflict" description="In Ref. 1; CAB41460." ref="1">
    <original>M</original>
    <variation>V</variation>
    <location>
        <position position="197"/>
    </location>
</feature>
<keyword id="KW-0963">Cytoplasm</keyword>
<keyword id="KW-0458">Lysosome</keyword>
<keyword id="KW-0496">Mitochondrion</keyword>
<keyword id="KW-0597">Phosphoprotein</keyword>
<keyword id="KW-1185">Reference proteome</keyword>
<keyword id="KW-0808">Transferase</keyword>
<name>ST1C2_RAT</name>
<comment type="function">
    <text evidence="2 5 7">Sulfotransferase that utilizes 3'-phospho-5'-adenylyl sulfate (PAPS) to catalyze the sulfate conjugation of phenolic compounds (PubMed:10872834). Does not transfer sulfate to steroids, dopamine, acetaminophen, or alpha-naphthol (PubMed:10872834). Except in mitochondria, where it can add sulfate to cholesterol producing cholesterol sulfate, which alters mitochondrial membrane organization, and impacts protein complex mobility increasing state-III respiration, thereby modulating mitochondrial respiration (PubMed:39194960). Catalyzes the sulfation of the carcinogenic N-hydroxy-2-acetylaminofluorene leading to highly reactive intermediates capable of forming DNA adducts, potentially resulting in mutagenesis (By similarity).</text>
</comment>
<comment type="catalytic activity">
    <reaction evidence="5">
        <text>a phenol + 3'-phosphoadenylyl sulfate = an aryl sulfate + adenosine 3',5'-bisphosphate + H(+)</text>
        <dbReference type="Rhea" id="RHEA:12164"/>
        <dbReference type="ChEBI" id="CHEBI:15378"/>
        <dbReference type="ChEBI" id="CHEBI:33853"/>
        <dbReference type="ChEBI" id="CHEBI:58339"/>
        <dbReference type="ChEBI" id="CHEBI:58343"/>
        <dbReference type="ChEBI" id="CHEBI:140317"/>
        <dbReference type="EC" id="2.8.2.1"/>
    </reaction>
    <physiologicalReaction direction="left-to-right" evidence="9">
        <dbReference type="Rhea" id="RHEA:12165"/>
    </physiologicalReaction>
</comment>
<comment type="catalytic activity">
    <reaction evidence="7">
        <text>cholesterol + 3'-phosphoadenylyl sulfate = cholesterol sulfate + adenosine 3',5'-bisphosphate + H(+)</text>
        <dbReference type="Rhea" id="RHEA:52368"/>
        <dbReference type="ChEBI" id="CHEBI:15378"/>
        <dbReference type="ChEBI" id="CHEBI:16113"/>
        <dbReference type="ChEBI" id="CHEBI:58339"/>
        <dbReference type="ChEBI" id="CHEBI:58343"/>
        <dbReference type="ChEBI" id="CHEBI:136579"/>
    </reaction>
    <physiologicalReaction direction="left-to-right" evidence="10">
        <dbReference type="Rhea" id="RHEA:52369"/>
    </physiologicalReaction>
</comment>
<comment type="subcellular location">
    <subcellularLocation>
        <location evidence="3">Cytoplasm</location>
    </subcellularLocation>
    <subcellularLocation>
        <location evidence="5">Lysosome</location>
    </subcellularLocation>
    <subcellularLocation>
        <location evidence="7">Mitochondrion</location>
    </subcellularLocation>
</comment>
<comment type="tissue specificity">
    <text evidence="5">Highly expressed in kidney and at lower levels in stomach and liver. More specifically found in the epithelia of proximal tubules of the kidney, of the bile duct, of the gastric mucosa, and in hepatocytes.</text>
</comment>
<comment type="induction">
    <text evidence="6">Down-regulated in kidney but not in stomach following feeding with 2-amino-4,5-diphenylthiazole.</text>
</comment>
<comment type="similarity">
    <text evidence="8">Belongs to the sulfotransferase 1 family.</text>
</comment>
<accession>Q9WUW8</accession>
<accession>F1LZL1</accession>
<accession>Q3ZAV3</accession>